<keyword id="KW-0963">Cytoplasm</keyword>
<keyword id="KW-0441">Lipid A biosynthesis</keyword>
<keyword id="KW-0444">Lipid biosynthesis</keyword>
<keyword id="KW-0443">Lipid metabolism</keyword>
<keyword id="KW-0456">Lyase</keyword>
<keyword id="KW-1185">Reference proteome</keyword>
<comment type="function">
    <text evidence="1">Involved in unsaturated fatty acids biosynthesis. Catalyzes the dehydration of short chain beta-hydroxyacyl-ACPs and long chain saturated and unsaturated beta-hydroxyacyl-ACPs.</text>
</comment>
<comment type="catalytic activity">
    <reaction evidence="1">
        <text>a (3R)-hydroxyacyl-[ACP] = a (2E)-enoyl-[ACP] + H2O</text>
        <dbReference type="Rhea" id="RHEA:13097"/>
        <dbReference type="Rhea" id="RHEA-COMP:9925"/>
        <dbReference type="Rhea" id="RHEA-COMP:9945"/>
        <dbReference type="ChEBI" id="CHEBI:15377"/>
        <dbReference type="ChEBI" id="CHEBI:78784"/>
        <dbReference type="ChEBI" id="CHEBI:78827"/>
        <dbReference type="EC" id="4.2.1.59"/>
    </reaction>
</comment>
<comment type="subcellular location">
    <subcellularLocation>
        <location evidence="1">Cytoplasm</location>
    </subcellularLocation>
</comment>
<comment type="similarity">
    <text evidence="1">Belongs to the thioester dehydratase family. FabZ subfamily.</text>
</comment>
<sequence length="144" mass="15690">MEKFLDINEIKKIIPHRYPFLLVDKITELEEGKSAVGYKNVTANEYFFNGHFPEEPVMPGVLIIEALAQVGAVAILSKEEFKGKIAYFGGINKAKFRKKVVPGDVLKLSIDLTKIKGVAGVGKAVATVDGKVAAEAELLFVIGK</sequence>
<proteinExistence type="inferred from homology"/>
<evidence type="ECO:0000255" key="1">
    <source>
        <dbReference type="HAMAP-Rule" id="MF_00406"/>
    </source>
</evidence>
<protein>
    <recommendedName>
        <fullName evidence="1">3-hydroxyacyl-[acyl-carrier-protein] dehydratase FabZ</fullName>
        <ecNumber evidence="1">4.2.1.59</ecNumber>
    </recommendedName>
    <alternativeName>
        <fullName evidence="1">(3R)-hydroxymyristoyl-[acyl-carrier-protein] dehydratase</fullName>
        <shortName evidence="1">(3R)-hydroxymyristoyl-ACP dehydrase</shortName>
    </alternativeName>
    <alternativeName>
        <fullName evidence="1">Beta-hydroxyacyl-ACP dehydratase</fullName>
    </alternativeName>
</protein>
<reference key="1">
    <citation type="journal article" date="2007" name="Genome Res.">
        <title>Genome sequence of a proteolytic (Group I) Clostridium botulinum strain Hall A and comparative analysis of the clostridial genomes.</title>
        <authorList>
            <person name="Sebaihia M."/>
            <person name="Peck M.W."/>
            <person name="Minton N.P."/>
            <person name="Thomson N.R."/>
            <person name="Holden M.T.G."/>
            <person name="Mitchell W.J."/>
            <person name="Carter A.T."/>
            <person name="Bentley S.D."/>
            <person name="Mason D.R."/>
            <person name="Crossman L."/>
            <person name="Paul C.J."/>
            <person name="Ivens A."/>
            <person name="Wells-Bennik M.H.J."/>
            <person name="Davis I.J."/>
            <person name="Cerdeno-Tarraga A.M."/>
            <person name="Churcher C."/>
            <person name="Quail M.A."/>
            <person name="Chillingworth T."/>
            <person name="Feltwell T."/>
            <person name="Fraser A."/>
            <person name="Goodhead I."/>
            <person name="Hance Z."/>
            <person name="Jagels K."/>
            <person name="Larke N."/>
            <person name="Maddison M."/>
            <person name="Moule S."/>
            <person name="Mungall K."/>
            <person name="Norbertczak H."/>
            <person name="Rabbinowitsch E."/>
            <person name="Sanders M."/>
            <person name="Simmonds M."/>
            <person name="White B."/>
            <person name="Whithead S."/>
            <person name="Parkhill J."/>
        </authorList>
    </citation>
    <scope>NUCLEOTIDE SEQUENCE [LARGE SCALE GENOMIC DNA]</scope>
    <source>
        <strain>Hall / ATCC 3502 / NCTC 13319 / Type A</strain>
    </source>
</reference>
<reference key="2">
    <citation type="journal article" date="2007" name="PLoS ONE">
        <title>Analysis of the neurotoxin complex genes in Clostridium botulinum A1-A4 and B1 strains: BoNT/A3, /Ba4 and /B1 clusters are located within plasmids.</title>
        <authorList>
            <person name="Smith T.J."/>
            <person name="Hill K.K."/>
            <person name="Foley B.T."/>
            <person name="Detter J.C."/>
            <person name="Munk A.C."/>
            <person name="Bruce D.C."/>
            <person name="Doggett N.A."/>
            <person name="Smith L.A."/>
            <person name="Marks J.D."/>
            <person name="Xie G."/>
            <person name="Brettin T.S."/>
        </authorList>
    </citation>
    <scope>NUCLEOTIDE SEQUENCE [LARGE SCALE GENOMIC DNA]</scope>
    <source>
        <strain>Hall / ATCC 3502 / NCTC 13319 / Type A</strain>
    </source>
</reference>
<feature type="chain" id="PRO_0000340767" description="3-hydroxyacyl-[acyl-carrier-protein] dehydratase FabZ">
    <location>
        <begin position="1"/>
        <end position="144"/>
    </location>
</feature>
<feature type="active site" evidence="1">
    <location>
        <position position="51"/>
    </location>
</feature>
<accession>A5I7X1</accession>
<accession>A7G951</accession>
<organism>
    <name type="scientific">Clostridium botulinum (strain Hall / ATCC 3502 / NCTC 13319 / Type A)</name>
    <dbReference type="NCBI Taxonomy" id="441771"/>
    <lineage>
        <taxon>Bacteria</taxon>
        <taxon>Bacillati</taxon>
        <taxon>Bacillota</taxon>
        <taxon>Clostridia</taxon>
        <taxon>Eubacteriales</taxon>
        <taxon>Clostridiaceae</taxon>
        <taxon>Clostridium</taxon>
    </lineage>
</organism>
<name>FABZ_CLOBH</name>
<gene>
    <name evidence="1" type="primary">fabZ</name>
    <name type="ordered locus">CBO3597</name>
    <name type="ordered locus">CLC_3575</name>
</gene>
<dbReference type="EC" id="4.2.1.59" evidence="1"/>
<dbReference type="EMBL" id="CP000727">
    <property type="protein sequence ID" value="ABS36411.1"/>
    <property type="molecule type" value="Genomic_DNA"/>
</dbReference>
<dbReference type="EMBL" id="AM412317">
    <property type="protein sequence ID" value="CAL85156.1"/>
    <property type="molecule type" value="Genomic_DNA"/>
</dbReference>
<dbReference type="RefSeq" id="WP_012048424.1">
    <property type="nucleotide sequence ID" value="NC_009698.1"/>
</dbReference>
<dbReference type="RefSeq" id="YP_001256076.1">
    <property type="nucleotide sequence ID" value="NC_009495.1"/>
</dbReference>
<dbReference type="RefSeq" id="YP_001389316.1">
    <property type="nucleotide sequence ID" value="NC_009698.1"/>
</dbReference>
<dbReference type="SMR" id="A5I7X1"/>
<dbReference type="GeneID" id="5186639"/>
<dbReference type="KEGG" id="cbh:CLC_3575"/>
<dbReference type="KEGG" id="cbo:CBO3597"/>
<dbReference type="PATRIC" id="fig|413999.7.peg.3574"/>
<dbReference type="HOGENOM" id="CLU_078912_3_0_9"/>
<dbReference type="PRO" id="PR:A5I7X1"/>
<dbReference type="Proteomes" id="UP000001986">
    <property type="component" value="Chromosome"/>
</dbReference>
<dbReference type="GO" id="GO:0005737">
    <property type="term" value="C:cytoplasm"/>
    <property type="evidence" value="ECO:0007669"/>
    <property type="project" value="UniProtKB-SubCell"/>
</dbReference>
<dbReference type="GO" id="GO:0016020">
    <property type="term" value="C:membrane"/>
    <property type="evidence" value="ECO:0007669"/>
    <property type="project" value="GOC"/>
</dbReference>
<dbReference type="GO" id="GO:0019171">
    <property type="term" value="F:(3R)-hydroxyacyl-[acyl-carrier-protein] dehydratase activity"/>
    <property type="evidence" value="ECO:0007669"/>
    <property type="project" value="UniProtKB-EC"/>
</dbReference>
<dbReference type="GO" id="GO:0006633">
    <property type="term" value="P:fatty acid biosynthetic process"/>
    <property type="evidence" value="ECO:0007669"/>
    <property type="project" value="UniProtKB-UniRule"/>
</dbReference>
<dbReference type="GO" id="GO:0009245">
    <property type="term" value="P:lipid A biosynthetic process"/>
    <property type="evidence" value="ECO:0007669"/>
    <property type="project" value="UniProtKB-UniRule"/>
</dbReference>
<dbReference type="CDD" id="cd01288">
    <property type="entry name" value="FabZ"/>
    <property type="match status" value="1"/>
</dbReference>
<dbReference type="FunFam" id="3.10.129.10:FF:000001">
    <property type="entry name" value="3-hydroxyacyl-[acyl-carrier-protein] dehydratase FabZ"/>
    <property type="match status" value="1"/>
</dbReference>
<dbReference type="Gene3D" id="3.10.129.10">
    <property type="entry name" value="Hotdog Thioesterase"/>
    <property type="match status" value="1"/>
</dbReference>
<dbReference type="HAMAP" id="MF_00406">
    <property type="entry name" value="FabZ"/>
    <property type="match status" value="1"/>
</dbReference>
<dbReference type="InterPro" id="IPR013114">
    <property type="entry name" value="FabA_FabZ"/>
</dbReference>
<dbReference type="InterPro" id="IPR010084">
    <property type="entry name" value="FabZ"/>
</dbReference>
<dbReference type="InterPro" id="IPR029069">
    <property type="entry name" value="HotDog_dom_sf"/>
</dbReference>
<dbReference type="NCBIfam" id="TIGR01750">
    <property type="entry name" value="fabZ"/>
    <property type="match status" value="1"/>
</dbReference>
<dbReference type="NCBIfam" id="NF000582">
    <property type="entry name" value="PRK00006.1"/>
    <property type="match status" value="1"/>
</dbReference>
<dbReference type="PANTHER" id="PTHR30272">
    <property type="entry name" value="3-HYDROXYACYL-[ACYL-CARRIER-PROTEIN] DEHYDRATASE"/>
    <property type="match status" value="1"/>
</dbReference>
<dbReference type="PANTHER" id="PTHR30272:SF1">
    <property type="entry name" value="3-HYDROXYACYL-[ACYL-CARRIER-PROTEIN] DEHYDRATASE"/>
    <property type="match status" value="1"/>
</dbReference>
<dbReference type="Pfam" id="PF07977">
    <property type="entry name" value="FabA"/>
    <property type="match status" value="1"/>
</dbReference>
<dbReference type="SUPFAM" id="SSF54637">
    <property type="entry name" value="Thioesterase/thiol ester dehydrase-isomerase"/>
    <property type="match status" value="1"/>
</dbReference>